<organism>
    <name type="scientific">Shewanella baltica (strain OS155 / ATCC BAA-1091)</name>
    <dbReference type="NCBI Taxonomy" id="325240"/>
    <lineage>
        <taxon>Bacteria</taxon>
        <taxon>Pseudomonadati</taxon>
        <taxon>Pseudomonadota</taxon>
        <taxon>Gammaproteobacteria</taxon>
        <taxon>Alteromonadales</taxon>
        <taxon>Shewanellaceae</taxon>
        <taxon>Shewanella</taxon>
    </lineage>
</organism>
<name>CLPS_SHEB5</name>
<protein>
    <recommendedName>
        <fullName evidence="1">ATP-dependent Clp protease adapter protein ClpS</fullName>
    </recommendedName>
</protein>
<comment type="function">
    <text evidence="1">Involved in the modulation of the specificity of the ClpAP-mediated ATP-dependent protein degradation.</text>
</comment>
<comment type="subunit">
    <text evidence="1">Binds to the N-terminal domain of the chaperone ClpA.</text>
</comment>
<comment type="similarity">
    <text evidence="1">Belongs to the ClpS family.</text>
</comment>
<sequence length="102" mass="11704">MAKIGNIEHVEERVESELMPPSMYKVVLNNDDYTPMDFVIEVLQVFFRKNEQEATDIMLTIHHQGKGICGIFPFGIAETKVIQVNQFARQNQHPLLCSLEKA</sequence>
<accession>A3D5F3</accession>
<reference key="1">
    <citation type="submission" date="2007-02" db="EMBL/GenBank/DDBJ databases">
        <title>Complete sequence of chromosome of Shewanella baltica OS155.</title>
        <authorList>
            <consortium name="US DOE Joint Genome Institute"/>
            <person name="Copeland A."/>
            <person name="Lucas S."/>
            <person name="Lapidus A."/>
            <person name="Barry K."/>
            <person name="Detter J.C."/>
            <person name="Glavina del Rio T."/>
            <person name="Hammon N."/>
            <person name="Israni S."/>
            <person name="Dalin E."/>
            <person name="Tice H."/>
            <person name="Pitluck S."/>
            <person name="Sims D.R."/>
            <person name="Brettin T."/>
            <person name="Bruce D."/>
            <person name="Han C."/>
            <person name="Tapia R."/>
            <person name="Brainard J."/>
            <person name="Schmutz J."/>
            <person name="Larimer F."/>
            <person name="Land M."/>
            <person name="Hauser L."/>
            <person name="Kyrpides N."/>
            <person name="Mikhailova N."/>
            <person name="Brettar I."/>
            <person name="Klappenbach J."/>
            <person name="Konstantinidis K."/>
            <person name="Rodrigues J."/>
            <person name="Tiedje J."/>
            <person name="Richardson P."/>
        </authorList>
    </citation>
    <scope>NUCLEOTIDE SEQUENCE [LARGE SCALE GENOMIC DNA]</scope>
    <source>
        <strain>OS155 / ATCC BAA-1091</strain>
    </source>
</reference>
<keyword id="KW-1185">Reference proteome</keyword>
<feature type="chain" id="PRO_1000022623" description="ATP-dependent Clp protease adapter protein ClpS">
    <location>
        <begin position="1"/>
        <end position="102"/>
    </location>
</feature>
<dbReference type="EMBL" id="CP000563">
    <property type="protein sequence ID" value="ABN61966.1"/>
    <property type="molecule type" value="Genomic_DNA"/>
</dbReference>
<dbReference type="RefSeq" id="WP_006081936.1">
    <property type="nucleotide sequence ID" value="NC_009052.1"/>
</dbReference>
<dbReference type="SMR" id="A3D5F3"/>
<dbReference type="STRING" id="325240.Sbal_2473"/>
<dbReference type="GeneID" id="11772683"/>
<dbReference type="KEGG" id="sbl:Sbal_2473"/>
<dbReference type="HOGENOM" id="CLU_134358_2_1_6"/>
<dbReference type="OrthoDB" id="9796121at2"/>
<dbReference type="Proteomes" id="UP000001557">
    <property type="component" value="Chromosome"/>
</dbReference>
<dbReference type="GO" id="GO:0030163">
    <property type="term" value="P:protein catabolic process"/>
    <property type="evidence" value="ECO:0007669"/>
    <property type="project" value="InterPro"/>
</dbReference>
<dbReference type="GO" id="GO:0006508">
    <property type="term" value="P:proteolysis"/>
    <property type="evidence" value="ECO:0007669"/>
    <property type="project" value="UniProtKB-UniRule"/>
</dbReference>
<dbReference type="FunFam" id="3.30.1390.10:FF:000002">
    <property type="entry name" value="ATP-dependent Clp protease adapter protein ClpS"/>
    <property type="match status" value="1"/>
</dbReference>
<dbReference type="Gene3D" id="3.30.1390.10">
    <property type="match status" value="1"/>
</dbReference>
<dbReference type="HAMAP" id="MF_00302">
    <property type="entry name" value="ClpS"/>
    <property type="match status" value="1"/>
</dbReference>
<dbReference type="InterPro" id="IPR022935">
    <property type="entry name" value="ClpS"/>
</dbReference>
<dbReference type="InterPro" id="IPR003769">
    <property type="entry name" value="ClpS_core"/>
</dbReference>
<dbReference type="InterPro" id="IPR014719">
    <property type="entry name" value="Ribosomal_bL12_C/ClpS-like"/>
</dbReference>
<dbReference type="NCBIfam" id="NF000670">
    <property type="entry name" value="PRK00033.1-3"/>
    <property type="match status" value="1"/>
</dbReference>
<dbReference type="NCBIfam" id="NF000672">
    <property type="entry name" value="PRK00033.1-5"/>
    <property type="match status" value="1"/>
</dbReference>
<dbReference type="PANTHER" id="PTHR33473:SF19">
    <property type="entry name" value="ATP-DEPENDENT CLP PROTEASE ADAPTER PROTEIN CLPS"/>
    <property type="match status" value="1"/>
</dbReference>
<dbReference type="PANTHER" id="PTHR33473">
    <property type="entry name" value="ATP-DEPENDENT CLP PROTEASE ADAPTER PROTEIN CLPS1, CHLOROPLASTIC"/>
    <property type="match status" value="1"/>
</dbReference>
<dbReference type="Pfam" id="PF02617">
    <property type="entry name" value="ClpS"/>
    <property type="match status" value="1"/>
</dbReference>
<dbReference type="SUPFAM" id="SSF54736">
    <property type="entry name" value="ClpS-like"/>
    <property type="match status" value="1"/>
</dbReference>
<proteinExistence type="inferred from homology"/>
<gene>
    <name evidence="1" type="primary">clpS</name>
    <name type="ordered locus">Sbal_2473</name>
</gene>
<evidence type="ECO:0000255" key="1">
    <source>
        <dbReference type="HAMAP-Rule" id="MF_00302"/>
    </source>
</evidence>